<protein>
    <recommendedName>
        <fullName evidence="1">Nucleoside triphosphate/diphosphate phosphatase</fullName>
        <ecNumber evidence="1">3.6.1.15</ecNumber>
        <ecNumber evidence="1">3.6.1.6</ecNumber>
    </recommendedName>
</protein>
<comment type="function">
    <text evidence="1">Has nucleoside phosphatase activity towards nucleoside triphosphates and nucleoside diphosphates.</text>
</comment>
<comment type="catalytic activity">
    <reaction evidence="1">
        <text>a ribonucleoside 5'-triphosphate + H2O = a ribonucleoside 5'-diphosphate + phosphate + H(+)</text>
        <dbReference type="Rhea" id="RHEA:23680"/>
        <dbReference type="ChEBI" id="CHEBI:15377"/>
        <dbReference type="ChEBI" id="CHEBI:15378"/>
        <dbReference type="ChEBI" id="CHEBI:43474"/>
        <dbReference type="ChEBI" id="CHEBI:57930"/>
        <dbReference type="ChEBI" id="CHEBI:61557"/>
        <dbReference type="EC" id="3.6.1.15"/>
    </reaction>
</comment>
<comment type="catalytic activity">
    <reaction evidence="1">
        <text>a ribonucleoside 5'-diphosphate + H2O = a ribonucleoside 5'-phosphate + phosphate + H(+)</text>
        <dbReference type="Rhea" id="RHEA:36799"/>
        <dbReference type="ChEBI" id="CHEBI:15377"/>
        <dbReference type="ChEBI" id="CHEBI:15378"/>
        <dbReference type="ChEBI" id="CHEBI:43474"/>
        <dbReference type="ChEBI" id="CHEBI:57930"/>
        <dbReference type="ChEBI" id="CHEBI:58043"/>
        <dbReference type="EC" id="3.6.1.6"/>
    </reaction>
</comment>
<comment type="cofactor">
    <cofactor evidence="1">
        <name>Mg(2+)</name>
        <dbReference type="ChEBI" id="CHEBI:18420"/>
    </cofactor>
</comment>
<comment type="similarity">
    <text evidence="1">Belongs to the Ntdp family.</text>
</comment>
<reference key="1">
    <citation type="journal article" date="2004" name="Nat. Biotechnol.">
        <title>Complete sequence and comparative genome analysis of the dairy bacterium Streptococcus thermophilus.</title>
        <authorList>
            <person name="Bolotin A."/>
            <person name="Quinquis B."/>
            <person name="Renault P."/>
            <person name="Sorokin A."/>
            <person name="Ehrlich S.D."/>
            <person name="Kulakauskas S."/>
            <person name="Lapidus A."/>
            <person name="Goltsman E."/>
            <person name="Mazur M."/>
            <person name="Pusch G.D."/>
            <person name="Fonstein M."/>
            <person name="Overbeek R."/>
            <person name="Kyprides N."/>
            <person name="Purnelle B."/>
            <person name="Prozzi D."/>
            <person name="Ngui K."/>
            <person name="Masuy D."/>
            <person name="Hancy F."/>
            <person name="Burteau S."/>
            <person name="Boutry M."/>
            <person name="Delcour J."/>
            <person name="Goffeau A."/>
            <person name="Hols P."/>
        </authorList>
    </citation>
    <scope>NUCLEOTIDE SEQUENCE [LARGE SCALE GENOMIC DNA]</scope>
    <source>
        <strain>CNRZ 1066</strain>
    </source>
</reference>
<name>NTDP_STRT1</name>
<feature type="chain" id="PRO_0000248132" description="Nucleoside triphosphate/diphosphate phosphatase">
    <location>
        <begin position="1"/>
        <end position="177"/>
    </location>
</feature>
<feature type="active site" description="Proton donor" evidence="1">
    <location>
        <position position="23"/>
    </location>
</feature>
<feature type="binding site" evidence="1">
    <location>
        <position position="87"/>
    </location>
    <ligand>
        <name>Mg(2+)</name>
        <dbReference type="ChEBI" id="CHEBI:18420"/>
        <label>1</label>
    </ligand>
</feature>
<feature type="binding site" evidence="1">
    <location>
        <position position="103"/>
    </location>
    <ligand>
        <name>Mg(2+)</name>
        <dbReference type="ChEBI" id="CHEBI:18420"/>
        <label>1</label>
    </ligand>
</feature>
<feature type="binding site" evidence="1">
    <location>
        <position position="105"/>
    </location>
    <ligand>
        <name>Mg(2+)</name>
        <dbReference type="ChEBI" id="CHEBI:18420"/>
        <label>2</label>
    </ligand>
</feature>
<feature type="binding site" evidence="1">
    <location>
        <position position="107"/>
    </location>
    <ligand>
        <name>Mg(2+)</name>
        <dbReference type="ChEBI" id="CHEBI:18420"/>
        <label>1</label>
    </ligand>
</feature>
<feature type="binding site" evidence="1">
    <location>
        <position position="107"/>
    </location>
    <ligand>
        <name>Mg(2+)</name>
        <dbReference type="ChEBI" id="CHEBI:18420"/>
        <label>2</label>
    </ligand>
</feature>
<feature type="binding site" evidence="1">
    <location>
        <position position="120"/>
    </location>
    <ligand>
        <name>Mg(2+)</name>
        <dbReference type="ChEBI" id="CHEBI:18420"/>
        <label>2</label>
    </ligand>
</feature>
<feature type="binding site" evidence="1">
    <location>
        <position position="123"/>
    </location>
    <ligand>
        <name>Mg(2+)</name>
        <dbReference type="ChEBI" id="CHEBI:18420"/>
        <label>2</label>
    </ligand>
</feature>
<accession>Q5M192</accession>
<sequence length="177" mass="21184">MKLPKEGDFITIQSYKHDGRLHRTWRDTMVLKTTENAVIGVNDHTLVTEADGRRWVTREPAIVYFHKKYWFNIIAMIRDNGISYYCNLASPYVLDQEALKYIDYDLDVKVFADGEKKLLDVDEYEIHKKEMHYSPDIDYILKEHVKILVDWINNGKGPFSQSYVNIWYKRYLELRNR</sequence>
<organism>
    <name type="scientific">Streptococcus thermophilus (strain CNRZ 1066)</name>
    <dbReference type="NCBI Taxonomy" id="299768"/>
    <lineage>
        <taxon>Bacteria</taxon>
        <taxon>Bacillati</taxon>
        <taxon>Bacillota</taxon>
        <taxon>Bacilli</taxon>
        <taxon>Lactobacillales</taxon>
        <taxon>Streptococcaceae</taxon>
        <taxon>Streptococcus</taxon>
    </lineage>
</organism>
<evidence type="ECO:0000255" key="1">
    <source>
        <dbReference type="HAMAP-Rule" id="MF_01568"/>
    </source>
</evidence>
<keyword id="KW-0378">Hydrolase</keyword>
<keyword id="KW-0460">Magnesium</keyword>
<keyword id="KW-0479">Metal-binding</keyword>
<dbReference type="EC" id="3.6.1.15" evidence="1"/>
<dbReference type="EC" id="3.6.1.6" evidence="1"/>
<dbReference type="EMBL" id="CP000024">
    <property type="protein sequence ID" value="AAV61977.1"/>
    <property type="molecule type" value="Genomic_DNA"/>
</dbReference>
<dbReference type="RefSeq" id="WP_002949762.1">
    <property type="nucleotide sequence ID" value="NC_006449.1"/>
</dbReference>
<dbReference type="SMR" id="Q5M192"/>
<dbReference type="KEGG" id="stc:str0374"/>
<dbReference type="HOGENOM" id="CLU_109787_1_0_9"/>
<dbReference type="GO" id="GO:0000287">
    <property type="term" value="F:magnesium ion binding"/>
    <property type="evidence" value="ECO:0007669"/>
    <property type="project" value="UniProtKB-UniRule"/>
</dbReference>
<dbReference type="GO" id="GO:0017110">
    <property type="term" value="F:nucleoside diphosphate phosphatase activity"/>
    <property type="evidence" value="ECO:0007669"/>
    <property type="project" value="UniProtKB-UniRule"/>
</dbReference>
<dbReference type="GO" id="GO:0017111">
    <property type="term" value="F:ribonucleoside triphosphate phosphatase activity"/>
    <property type="evidence" value="ECO:0007669"/>
    <property type="project" value="UniProtKB-UniRule"/>
</dbReference>
<dbReference type="Gene3D" id="2.40.380.10">
    <property type="entry name" value="FomD-like"/>
    <property type="match status" value="1"/>
</dbReference>
<dbReference type="HAMAP" id="MF_01568">
    <property type="entry name" value="Ntdp"/>
    <property type="match status" value="1"/>
</dbReference>
<dbReference type="InterPro" id="IPR007295">
    <property type="entry name" value="DUF402"/>
</dbReference>
<dbReference type="InterPro" id="IPR035930">
    <property type="entry name" value="FomD-like_sf"/>
</dbReference>
<dbReference type="InterPro" id="IPR050212">
    <property type="entry name" value="Ntdp-like"/>
</dbReference>
<dbReference type="InterPro" id="IPR016882">
    <property type="entry name" value="SA1684"/>
</dbReference>
<dbReference type="NCBIfam" id="NF010183">
    <property type="entry name" value="PRK13662.1"/>
    <property type="match status" value="1"/>
</dbReference>
<dbReference type="PANTHER" id="PTHR39159">
    <property type="match status" value="1"/>
</dbReference>
<dbReference type="PANTHER" id="PTHR39159:SF1">
    <property type="entry name" value="UPF0374 PROTEIN YGAC"/>
    <property type="match status" value="1"/>
</dbReference>
<dbReference type="Pfam" id="PF04167">
    <property type="entry name" value="DUF402"/>
    <property type="match status" value="1"/>
</dbReference>
<dbReference type="PIRSF" id="PIRSF028345">
    <property type="entry name" value="UCP028345"/>
    <property type="match status" value="1"/>
</dbReference>
<dbReference type="SUPFAM" id="SSF159234">
    <property type="entry name" value="FomD-like"/>
    <property type="match status" value="1"/>
</dbReference>
<proteinExistence type="inferred from homology"/>
<gene>
    <name type="ordered locus">str0374</name>
</gene>